<reference key="1">
    <citation type="journal article" date="2007" name="Protein Expr. Purif.">
        <title>Molecular cloning and functional expression of bovine deoxyhypusine hydroxylase cDNA and homologs.</title>
        <authorList>
            <person name="Huang J.-K."/>
            <person name="Cui Y."/>
            <person name="Chen C.-H."/>
            <person name="Clampitt D."/>
            <person name="Lin C.-T."/>
            <person name="Wen L."/>
        </authorList>
    </citation>
    <scope>NUCLEOTIDE SEQUENCE [MRNA]</scope>
    <scope>FUNCTION</scope>
    <scope>CATALYTIC ACTIVITY</scope>
    <scope>PATHWAY</scope>
    <scope>MUTAGENESIS OF GLU-57</scope>
    <source>
        <tissue>Brain</tissue>
    </source>
</reference>
<reference key="2">
    <citation type="submission" date="2006-08" db="EMBL/GenBank/DDBJ databases">
        <authorList>
            <consortium name="NIH - Mammalian Gene Collection (MGC) project"/>
        </authorList>
    </citation>
    <scope>NUCLEOTIDE SEQUENCE [LARGE SCALE MRNA]</scope>
    <source>
        <strain>Hereford</strain>
        <tissue>Fetal skin</tissue>
    </source>
</reference>
<organism>
    <name type="scientific">Bos taurus</name>
    <name type="common">Bovine</name>
    <dbReference type="NCBI Taxonomy" id="9913"/>
    <lineage>
        <taxon>Eukaryota</taxon>
        <taxon>Metazoa</taxon>
        <taxon>Chordata</taxon>
        <taxon>Craniata</taxon>
        <taxon>Vertebrata</taxon>
        <taxon>Euteleostomi</taxon>
        <taxon>Mammalia</taxon>
        <taxon>Eutheria</taxon>
        <taxon>Laurasiatheria</taxon>
        <taxon>Artiodactyla</taxon>
        <taxon>Ruminantia</taxon>
        <taxon>Pecora</taxon>
        <taxon>Bovidae</taxon>
        <taxon>Bovinae</taxon>
        <taxon>Bos</taxon>
    </lineage>
</organism>
<gene>
    <name evidence="2" type="primary">DOHH</name>
</gene>
<protein>
    <recommendedName>
        <fullName evidence="2">Deoxyhypusine hydroxylase</fullName>
        <shortName evidence="2">DOHH</shortName>
        <ecNumber evidence="2 3">1.14.99.29</ecNumber>
    </recommendedName>
    <alternativeName>
        <fullName evidence="2">Deoxyhypusine dioxygenase</fullName>
    </alternativeName>
    <alternativeName>
        <fullName evidence="2">Deoxyhypusine monooxygenase</fullName>
    </alternativeName>
</protein>
<accession>Q0VC53</accession>
<accession>A5H2K6</accession>
<accession>A5H2K8</accession>
<proteinExistence type="evidence at protein level"/>
<feature type="chain" id="PRO_0000326490" description="Deoxyhypusine hydroxylase">
    <location>
        <begin position="1"/>
        <end position="303"/>
    </location>
</feature>
<feature type="repeat" description="HEAT-like PBS-type 1">
    <location>
        <begin position="23"/>
        <end position="49"/>
    </location>
</feature>
<feature type="repeat" description="HEAT-like PBS-type 2">
    <location>
        <begin position="54"/>
        <end position="80"/>
    </location>
</feature>
<feature type="repeat" description="HEAT-like PBS-type 3">
    <location>
        <begin position="87"/>
        <end position="113"/>
    </location>
</feature>
<feature type="repeat" description="HEAT-like PBS-type 4">
    <location>
        <begin position="175"/>
        <end position="201"/>
    </location>
</feature>
<feature type="repeat" description="HEAT-like PBS-type 5">
    <location>
        <begin position="206"/>
        <end position="232"/>
    </location>
</feature>
<feature type="repeat" description="HEAT-like PBS-type 6">
    <location>
        <begin position="239"/>
        <end position="265"/>
    </location>
</feature>
<feature type="binding site" evidence="1 2">
    <location>
        <position position="56"/>
    </location>
    <ligand>
        <name>Fe cation</name>
        <dbReference type="ChEBI" id="CHEBI:24875"/>
        <label>1</label>
    </ligand>
</feature>
<feature type="binding site" evidence="1 2">
    <location>
        <position position="89"/>
    </location>
    <ligand>
        <name>Fe cation</name>
        <dbReference type="ChEBI" id="CHEBI:24875"/>
        <label>2</label>
    </ligand>
</feature>
<feature type="binding site" evidence="1 2">
    <location>
        <position position="90"/>
    </location>
    <ligand>
        <name>Fe cation</name>
        <dbReference type="ChEBI" id="CHEBI:24875"/>
        <label>2</label>
    </ligand>
</feature>
<feature type="binding site" evidence="1 2">
    <location>
        <position position="208"/>
    </location>
    <ligand>
        <name>Fe cation</name>
        <dbReference type="ChEBI" id="CHEBI:24875"/>
        <label>2</label>
    </ligand>
</feature>
<feature type="binding site" evidence="1 2">
    <location>
        <position position="241"/>
    </location>
    <ligand>
        <name>Fe cation</name>
        <dbReference type="ChEBI" id="CHEBI:24875"/>
        <label>1</label>
    </ligand>
</feature>
<feature type="binding site" evidence="1 2">
    <location>
        <position position="242"/>
    </location>
    <ligand>
        <name>Fe cation</name>
        <dbReference type="ChEBI" id="CHEBI:24875"/>
        <label>1</label>
    </ligand>
</feature>
<feature type="modified residue" description="N-acetylmethionine" evidence="1">
    <location>
        <position position="1"/>
    </location>
</feature>
<feature type="mutagenesis site" description="Loss of deoxyhypusine monooxygenase activity." evidence="3">
    <original>E</original>
    <variation>G</variation>
    <location>
        <position position="57"/>
    </location>
</feature>
<feature type="sequence conflict" description="In Ref. 1; ABL86660/ABL86661/ABL86662." evidence="4" ref="1">
    <original>P</original>
    <variation>S</variation>
    <location>
        <position position="266"/>
    </location>
</feature>
<dbReference type="EC" id="1.14.99.29" evidence="2 3"/>
<dbReference type="EMBL" id="DQ990881">
    <property type="protein sequence ID" value="ABL86660.1"/>
    <property type="molecule type" value="mRNA"/>
</dbReference>
<dbReference type="EMBL" id="DQ990882">
    <property type="protein sequence ID" value="ABL86661.1"/>
    <property type="molecule type" value="mRNA"/>
</dbReference>
<dbReference type="EMBL" id="DQ990883">
    <property type="protein sequence ID" value="ABL86662.1"/>
    <property type="molecule type" value="mRNA"/>
</dbReference>
<dbReference type="EMBL" id="BC120351">
    <property type="protein sequence ID" value="AAI20352.1"/>
    <property type="molecule type" value="mRNA"/>
</dbReference>
<dbReference type="RefSeq" id="NP_001069354.1">
    <property type="nucleotide sequence ID" value="NM_001075886.1"/>
</dbReference>
<dbReference type="RefSeq" id="XP_005209005.1">
    <property type="nucleotide sequence ID" value="XM_005208948.4"/>
</dbReference>
<dbReference type="RefSeq" id="XP_010805282.1">
    <property type="nucleotide sequence ID" value="XM_010806980.3"/>
</dbReference>
<dbReference type="RefSeq" id="XP_059744200.1">
    <property type="nucleotide sequence ID" value="XM_059888217.1"/>
</dbReference>
<dbReference type="SMR" id="Q0VC53"/>
<dbReference type="FunCoup" id="Q0VC53">
    <property type="interactions" value="2471"/>
</dbReference>
<dbReference type="STRING" id="9913.ENSBTAP00000006935"/>
<dbReference type="PaxDb" id="9913-ENSBTAP00000006935"/>
<dbReference type="Ensembl" id="ENSBTAT00000006935.7">
    <property type="protein sequence ID" value="ENSBTAP00000006935.5"/>
    <property type="gene ID" value="ENSBTAG00000005272.7"/>
</dbReference>
<dbReference type="GeneID" id="526521"/>
<dbReference type="KEGG" id="bta:526521"/>
<dbReference type="CTD" id="83475"/>
<dbReference type="VEuPathDB" id="HostDB:ENSBTAG00000005272"/>
<dbReference type="VGNC" id="VGNC:28164">
    <property type="gene designation" value="DOHH"/>
</dbReference>
<dbReference type="eggNOG" id="KOG0567">
    <property type="taxonomic scope" value="Eukaryota"/>
</dbReference>
<dbReference type="GeneTree" id="ENSGT00500000044957"/>
<dbReference type="HOGENOM" id="CLU_053974_0_0_1"/>
<dbReference type="InParanoid" id="Q0VC53"/>
<dbReference type="OMA" id="LQEPCSI"/>
<dbReference type="OrthoDB" id="421002at2759"/>
<dbReference type="TreeFam" id="TF105626"/>
<dbReference type="BRENDA" id="1.14.99.29">
    <property type="organism ID" value="908"/>
</dbReference>
<dbReference type="Reactome" id="R-BTA-204626">
    <property type="pathway name" value="Hypusine synthesis from eIF5A-lysine"/>
</dbReference>
<dbReference type="UniPathway" id="UPA00354"/>
<dbReference type="Proteomes" id="UP000009136">
    <property type="component" value="Chromosome 7"/>
</dbReference>
<dbReference type="Bgee" id="ENSBTAG00000005272">
    <property type="expression patterns" value="Expressed in tongue muscle and 103 other cell types or tissues"/>
</dbReference>
<dbReference type="GO" id="GO:0019135">
    <property type="term" value="F:deoxyhypusine monooxygenase activity"/>
    <property type="evidence" value="ECO:0000318"/>
    <property type="project" value="GO_Central"/>
</dbReference>
<dbReference type="GO" id="GO:0005506">
    <property type="term" value="F:iron ion binding"/>
    <property type="evidence" value="ECO:0000250"/>
    <property type="project" value="UniProtKB"/>
</dbReference>
<dbReference type="FunFam" id="1.25.10.10:FF:000099">
    <property type="entry name" value="Deoxyhypusine hydroxylase"/>
    <property type="match status" value="2"/>
</dbReference>
<dbReference type="Gene3D" id="1.25.10.10">
    <property type="entry name" value="Leucine-rich Repeat Variant"/>
    <property type="match status" value="2"/>
</dbReference>
<dbReference type="HAMAP" id="MF_03101">
    <property type="entry name" value="Deoxyhypusine_hydroxylase"/>
    <property type="match status" value="1"/>
</dbReference>
<dbReference type="InterPro" id="IPR011989">
    <property type="entry name" value="ARM-like"/>
</dbReference>
<dbReference type="InterPro" id="IPR016024">
    <property type="entry name" value="ARM-type_fold"/>
</dbReference>
<dbReference type="InterPro" id="IPR027517">
    <property type="entry name" value="Deoxyhypusine_hydroxylase"/>
</dbReference>
<dbReference type="InterPro" id="IPR021133">
    <property type="entry name" value="HEAT_type_2"/>
</dbReference>
<dbReference type="InterPro" id="IPR004155">
    <property type="entry name" value="PBS_lyase_HEAT"/>
</dbReference>
<dbReference type="PANTHER" id="PTHR12697:SF5">
    <property type="entry name" value="DEOXYHYPUSINE HYDROXYLASE"/>
    <property type="match status" value="1"/>
</dbReference>
<dbReference type="PANTHER" id="PTHR12697">
    <property type="entry name" value="PBS LYASE HEAT-LIKE PROTEIN"/>
    <property type="match status" value="1"/>
</dbReference>
<dbReference type="Pfam" id="PF13646">
    <property type="entry name" value="HEAT_2"/>
    <property type="match status" value="2"/>
</dbReference>
<dbReference type="SMART" id="SM00567">
    <property type="entry name" value="EZ_HEAT"/>
    <property type="match status" value="6"/>
</dbReference>
<dbReference type="SUPFAM" id="SSF48371">
    <property type="entry name" value="ARM repeat"/>
    <property type="match status" value="1"/>
</dbReference>
<dbReference type="PROSITE" id="PS50077">
    <property type="entry name" value="HEAT_REPEAT"/>
    <property type="match status" value="1"/>
</dbReference>
<comment type="function">
    <text evidence="2 3">Catalyzes the hydroxylation of the N(6)-(4-aminobutyl)-L-lysine intermediate produced by deoxyhypusine synthase/DHPS on a critical lysine of the eukaryotic translation initiation factor 5A/eIF-5A. This is the second step of the post-translational modification of that lysine into an unusual amino acid residue named hypusine. Hypusination is unique to mature eIF-5A factor and is essential for its function.</text>
</comment>
<comment type="catalytic activity">
    <reaction evidence="2 3">
        <text>[eIF5A protein]-deoxyhypusine + AH2 + O2 = [eIF5A protein]-hypusine + A + H2O</text>
        <dbReference type="Rhea" id="RHEA:14101"/>
        <dbReference type="Rhea" id="RHEA-COMP:10144"/>
        <dbReference type="Rhea" id="RHEA-COMP:12592"/>
        <dbReference type="ChEBI" id="CHEBI:13193"/>
        <dbReference type="ChEBI" id="CHEBI:15377"/>
        <dbReference type="ChEBI" id="CHEBI:15379"/>
        <dbReference type="ChEBI" id="CHEBI:17499"/>
        <dbReference type="ChEBI" id="CHEBI:82657"/>
        <dbReference type="ChEBI" id="CHEBI:91175"/>
        <dbReference type="EC" id="1.14.99.29"/>
    </reaction>
</comment>
<comment type="cofactor">
    <cofactor evidence="1 2">
        <name>Fe(2+)</name>
        <dbReference type="ChEBI" id="CHEBI:29033"/>
    </cofactor>
    <text evidence="1 2">Binds 2 Fe(2+) ions per subunit.</text>
</comment>
<comment type="pathway">
    <text evidence="2 3">Protein modification; eIF5A hypusination.</text>
</comment>
<comment type="similarity">
    <text evidence="2">Belongs to the deoxyhypusine hydroxylase family.</text>
</comment>
<keyword id="KW-0007">Acetylation</keyword>
<keyword id="KW-0386">Hypusine biosynthesis</keyword>
<keyword id="KW-0408">Iron</keyword>
<keyword id="KW-0479">Metal-binding</keyword>
<keyword id="KW-0503">Monooxygenase</keyword>
<keyword id="KW-0560">Oxidoreductase</keyword>
<keyword id="KW-1185">Reference proteome</keyword>
<keyword id="KW-0677">Repeat</keyword>
<evidence type="ECO:0000250" key="1">
    <source>
        <dbReference type="UniProtKB" id="Q9BU89"/>
    </source>
</evidence>
<evidence type="ECO:0000255" key="2">
    <source>
        <dbReference type="HAMAP-Rule" id="MF_03101"/>
    </source>
</evidence>
<evidence type="ECO:0000269" key="3">
    <source>
    </source>
</evidence>
<evidence type="ECO:0000305" key="4"/>
<name>DOHH_BOVIN</name>
<sequence>MVTEQEVEAVGQTLVDPGQPLQARFRALFTLRGLGGPVAISWISRAFDDDSALLKHELAYCLGQMQDRRAIPVLLDVLRDTRQEPMVRHEAGEALGAIGDPEVLEILKQYSTDPVVEVAETCQLAVRRLEWLQQHGGESAVRGPYLSVDPAPPAEERDLGQLREALLDEARPLFDRYRAMFALRDAGGKEAALALAEGLRCGSALFRHEIGYVLGQMQHEAAVPQLAAALAQPTENPMVRHECAEALGAIARPACLAALRAHVADPERVVRESCEVALDMYEYETGSTFQYADGLERLRSPLS</sequence>